<dbReference type="EMBL" id="AL078611">
    <property type="status" value="NOT_ANNOTATED_CDS"/>
    <property type="molecule type" value="Genomic_DNA"/>
</dbReference>
<dbReference type="EMBL" id="CH471138">
    <property type="protein sequence ID" value="EAW73407.1"/>
    <property type="molecule type" value="Genomic_DNA"/>
</dbReference>
<dbReference type="EMBL" id="BC045796">
    <property type="protein sequence ID" value="AAH45796.1"/>
    <property type="molecule type" value="mRNA"/>
</dbReference>
<dbReference type="EMBL" id="BC067871">
    <property type="protein sequence ID" value="AAH67871.1"/>
    <property type="molecule type" value="mRNA"/>
</dbReference>
<dbReference type="CCDS" id="CCDS33670.1"/>
<dbReference type="RefSeq" id="NP_997210.3">
    <property type="nucleotide sequence ID" value="NM_207327.4"/>
</dbReference>
<dbReference type="RefSeq" id="XP_011528267.1">
    <property type="nucleotide sequence ID" value="XM_011529965.3"/>
</dbReference>
<dbReference type="BioGRID" id="127293">
    <property type="interactions" value="36"/>
</dbReference>
<dbReference type="FunCoup" id="Q6NVV7">
    <property type="interactions" value="62"/>
</dbReference>
<dbReference type="IntAct" id="Q6NVV7">
    <property type="interactions" value="33"/>
</dbReference>
<dbReference type="MINT" id="Q6NVV7"/>
<dbReference type="STRING" id="9606.ENSP00000325301"/>
<dbReference type="iPTMnet" id="Q6NVV7"/>
<dbReference type="PhosphoSitePlus" id="Q6NVV7"/>
<dbReference type="BioMuta" id="CDPF1"/>
<dbReference type="DMDM" id="74749009"/>
<dbReference type="jPOST" id="Q6NVV7"/>
<dbReference type="MassIVE" id="Q6NVV7"/>
<dbReference type="PaxDb" id="9606-ENSP00000325301"/>
<dbReference type="PeptideAtlas" id="Q6NVV7"/>
<dbReference type="ProteomicsDB" id="66725"/>
<dbReference type="Pumba" id="Q6NVV7"/>
<dbReference type="Antibodypedia" id="13834">
    <property type="antibodies" value="33 antibodies from 10 providers"/>
</dbReference>
<dbReference type="DNASU" id="150383"/>
<dbReference type="Ensembl" id="ENST00000314567.8">
    <property type="protein sequence ID" value="ENSP00000325301.3"/>
    <property type="gene ID" value="ENSG00000205643.11"/>
</dbReference>
<dbReference type="GeneID" id="150383"/>
<dbReference type="KEGG" id="hsa:150383"/>
<dbReference type="MANE-Select" id="ENST00000314567.8">
    <property type="protein sequence ID" value="ENSP00000325301.3"/>
    <property type="RefSeq nucleotide sequence ID" value="NM_207327.5"/>
    <property type="RefSeq protein sequence ID" value="NP_997210.3"/>
</dbReference>
<dbReference type="UCSC" id="uc003bhe.4">
    <property type="organism name" value="human"/>
</dbReference>
<dbReference type="AGR" id="HGNC:33710"/>
<dbReference type="CTD" id="150383"/>
<dbReference type="DisGeNET" id="150383"/>
<dbReference type="GeneCards" id="CDPF1"/>
<dbReference type="HGNC" id="HGNC:33710">
    <property type="gene designation" value="CDPF1"/>
</dbReference>
<dbReference type="HPA" id="ENSG00000205643">
    <property type="expression patterns" value="Low tissue specificity"/>
</dbReference>
<dbReference type="neXtProt" id="NX_Q6NVV7"/>
<dbReference type="OpenTargets" id="ENSG00000205643"/>
<dbReference type="PharmGKB" id="PA162379006"/>
<dbReference type="VEuPathDB" id="HostDB:ENSG00000205643"/>
<dbReference type="eggNOG" id="KOG4543">
    <property type="taxonomic scope" value="Eukaryota"/>
</dbReference>
<dbReference type="GeneTree" id="ENSGT00390000007925"/>
<dbReference type="HOGENOM" id="CLU_138011_0_0_1"/>
<dbReference type="InParanoid" id="Q6NVV7"/>
<dbReference type="OMA" id="CDMHELV"/>
<dbReference type="OrthoDB" id="191995at2759"/>
<dbReference type="PAN-GO" id="Q6NVV7">
    <property type="GO annotations" value="0 GO annotations based on evolutionary models"/>
</dbReference>
<dbReference type="PhylomeDB" id="Q6NVV7"/>
<dbReference type="TreeFam" id="TF313933"/>
<dbReference type="PathwayCommons" id="Q6NVV7"/>
<dbReference type="SignaLink" id="Q6NVV7"/>
<dbReference type="BioGRID-ORCS" id="150383">
    <property type="hits" value="9 hits in 1151 CRISPR screens"/>
</dbReference>
<dbReference type="ChiTaRS" id="CDPF1">
    <property type="organism name" value="human"/>
</dbReference>
<dbReference type="GenomeRNAi" id="150383"/>
<dbReference type="Pharos" id="Q6NVV7">
    <property type="development level" value="Tdark"/>
</dbReference>
<dbReference type="PRO" id="PR:Q6NVV7"/>
<dbReference type="Proteomes" id="UP000005640">
    <property type="component" value="Chromosome 22"/>
</dbReference>
<dbReference type="RNAct" id="Q6NVV7">
    <property type="molecule type" value="protein"/>
</dbReference>
<dbReference type="Bgee" id="ENSG00000205643">
    <property type="expression patterns" value="Expressed in pancreatic ductal cell and 112 other cell types or tissues"/>
</dbReference>
<dbReference type="ExpressionAtlas" id="Q6NVV7">
    <property type="expression patterns" value="baseline and differential"/>
</dbReference>
<dbReference type="InterPro" id="IPR042426">
    <property type="entry name" value="CDPF1"/>
</dbReference>
<dbReference type="InterPro" id="IPR018785">
    <property type="entry name" value="CDPF1_dom"/>
</dbReference>
<dbReference type="PANTHER" id="PTHR31849:SF1">
    <property type="entry name" value="CYSTEINE-RICH DPF MOTIF DOMAIN-CONTAINING PROTEIN 1"/>
    <property type="match status" value="1"/>
</dbReference>
<dbReference type="PANTHER" id="PTHR31849">
    <property type="entry name" value="CYSTEINE-RICH PDF MOTIF DOMAIN-CONTAINING PROTEIN 1"/>
    <property type="match status" value="1"/>
</dbReference>
<dbReference type="Pfam" id="PF10170">
    <property type="entry name" value="C6_DPF"/>
    <property type="match status" value="1"/>
</dbReference>
<dbReference type="PRINTS" id="PR01995">
    <property type="entry name" value="UPF0595"/>
</dbReference>
<sequence length="123" mass="13877">MASHVECRPLGVFECELCTLTAPYSYVGQKPPNTQSMVLLEESYVMKDPFTSDKDRFLVLGSCCSLCSRLVCVGPECSLFYSKRFCLPCVRENINAFPQEIRQDLEKRKAPSKRTPSQPGSRT</sequence>
<name>CDPF1_HUMAN</name>
<reference key="1">
    <citation type="journal article" date="1999" name="Nature">
        <title>The DNA sequence of human chromosome 22.</title>
        <authorList>
            <person name="Dunham I."/>
            <person name="Hunt A.R."/>
            <person name="Collins J.E."/>
            <person name="Bruskiewich R."/>
            <person name="Beare D.M."/>
            <person name="Clamp M."/>
            <person name="Smink L.J."/>
            <person name="Ainscough R."/>
            <person name="Almeida J.P."/>
            <person name="Babbage A.K."/>
            <person name="Bagguley C."/>
            <person name="Bailey J."/>
            <person name="Barlow K.F."/>
            <person name="Bates K.N."/>
            <person name="Beasley O.P."/>
            <person name="Bird C.P."/>
            <person name="Blakey S.E."/>
            <person name="Bridgeman A.M."/>
            <person name="Buck D."/>
            <person name="Burgess J."/>
            <person name="Burrill W.D."/>
            <person name="Burton J."/>
            <person name="Carder C."/>
            <person name="Carter N.P."/>
            <person name="Chen Y."/>
            <person name="Clark G."/>
            <person name="Clegg S.M."/>
            <person name="Cobley V.E."/>
            <person name="Cole C.G."/>
            <person name="Collier R.E."/>
            <person name="Connor R."/>
            <person name="Conroy D."/>
            <person name="Corby N.R."/>
            <person name="Coville G.J."/>
            <person name="Cox A.V."/>
            <person name="Davis J."/>
            <person name="Dawson E."/>
            <person name="Dhami P.D."/>
            <person name="Dockree C."/>
            <person name="Dodsworth S.J."/>
            <person name="Durbin R.M."/>
            <person name="Ellington A.G."/>
            <person name="Evans K.L."/>
            <person name="Fey J.M."/>
            <person name="Fleming K."/>
            <person name="French L."/>
            <person name="Garner A.A."/>
            <person name="Gilbert J.G.R."/>
            <person name="Goward M.E."/>
            <person name="Grafham D.V."/>
            <person name="Griffiths M.N.D."/>
            <person name="Hall C."/>
            <person name="Hall R.E."/>
            <person name="Hall-Tamlyn G."/>
            <person name="Heathcott R.W."/>
            <person name="Ho S."/>
            <person name="Holmes S."/>
            <person name="Hunt S.E."/>
            <person name="Jones M.C."/>
            <person name="Kershaw J."/>
            <person name="Kimberley A.M."/>
            <person name="King A."/>
            <person name="Laird G.K."/>
            <person name="Langford C.F."/>
            <person name="Leversha M.A."/>
            <person name="Lloyd C."/>
            <person name="Lloyd D.M."/>
            <person name="Martyn I.D."/>
            <person name="Mashreghi-Mohammadi M."/>
            <person name="Matthews L.H."/>
            <person name="Mccann O.T."/>
            <person name="Mcclay J."/>
            <person name="Mclaren S."/>
            <person name="McMurray A.A."/>
            <person name="Milne S.A."/>
            <person name="Mortimore B.J."/>
            <person name="Odell C.N."/>
            <person name="Pavitt R."/>
            <person name="Pearce A.V."/>
            <person name="Pearson D."/>
            <person name="Phillimore B.J.C.T."/>
            <person name="Phillips S.H."/>
            <person name="Plumb R.W."/>
            <person name="Ramsay H."/>
            <person name="Ramsey Y."/>
            <person name="Rogers L."/>
            <person name="Ross M.T."/>
            <person name="Scott C.E."/>
            <person name="Sehra H.K."/>
            <person name="Skuce C.D."/>
            <person name="Smalley S."/>
            <person name="Smith M.L."/>
            <person name="Soderlund C."/>
            <person name="Spragon L."/>
            <person name="Steward C.A."/>
            <person name="Sulston J.E."/>
            <person name="Swann R.M."/>
            <person name="Vaudin M."/>
            <person name="Wall M."/>
            <person name="Wallis J.M."/>
            <person name="Whiteley M.N."/>
            <person name="Willey D.L."/>
            <person name="Williams L."/>
            <person name="Williams S.A."/>
            <person name="Williamson H."/>
            <person name="Wilmer T.E."/>
            <person name="Wilming L."/>
            <person name="Wright C.L."/>
            <person name="Hubbard T."/>
            <person name="Bentley D.R."/>
            <person name="Beck S."/>
            <person name="Rogers J."/>
            <person name="Shimizu N."/>
            <person name="Minoshima S."/>
            <person name="Kawasaki K."/>
            <person name="Sasaki T."/>
            <person name="Asakawa S."/>
            <person name="Kudoh J."/>
            <person name="Shintani A."/>
            <person name="Shibuya K."/>
            <person name="Yoshizaki Y."/>
            <person name="Aoki N."/>
            <person name="Mitsuyama S."/>
            <person name="Roe B.A."/>
            <person name="Chen F."/>
            <person name="Chu L."/>
            <person name="Crabtree J."/>
            <person name="Deschamps S."/>
            <person name="Do A."/>
            <person name="Do T."/>
            <person name="Dorman A."/>
            <person name="Fang F."/>
            <person name="Fu Y."/>
            <person name="Hu P."/>
            <person name="Hua A."/>
            <person name="Kenton S."/>
            <person name="Lai H."/>
            <person name="Lao H.I."/>
            <person name="Lewis J."/>
            <person name="Lewis S."/>
            <person name="Lin S.-P."/>
            <person name="Loh P."/>
            <person name="Malaj E."/>
            <person name="Nguyen T."/>
            <person name="Pan H."/>
            <person name="Phan S."/>
            <person name="Qi S."/>
            <person name="Qian Y."/>
            <person name="Ray L."/>
            <person name="Ren Q."/>
            <person name="Shaull S."/>
            <person name="Sloan D."/>
            <person name="Song L."/>
            <person name="Wang Q."/>
            <person name="Wang Y."/>
            <person name="Wang Z."/>
            <person name="White J."/>
            <person name="Willingham D."/>
            <person name="Wu H."/>
            <person name="Yao Z."/>
            <person name="Zhan M."/>
            <person name="Zhang G."/>
            <person name="Chissoe S."/>
            <person name="Murray J."/>
            <person name="Miller N."/>
            <person name="Minx P."/>
            <person name="Fulton R."/>
            <person name="Johnson D."/>
            <person name="Bemis G."/>
            <person name="Bentley D."/>
            <person name="Bradshaw H."/>
            <person name="Bourne S."/>
            <person name="Cordes M."/>
            <person name="Du Z."/>
            <person name="Fulton L."/>
            <person name="Goela D."/>
            <person name="Graves T."/>
            <person name="Hawkins J."/>
            <person name="Hinds K."/>
            <person name="Kemp K."/>
            <person name="Latreille P."/>
            <person name="Layman D."/>
            <person name="Ozersky P."/>
            <person name="Rohlfing T."/>
            <person name="Scheet P."/>
            <person name="Walker C."/>
            <person name="Wamsley A."/>
            <person name="Wohldmann P."/>
            <person name="Pepin K."/>
            <person name="Nelson J."/>
            <person name="Korf I."/>
            <person name="Bedell J.A."/>
            <person name="Hillier L.W."/>
            <person name="Mardis E."/>
            <person name="Waterston R."/>
            <person name="Wilson R."/>
            <person name="Emanuel B.S."/>
            <person name="Shaikh T."/>
            <person name="Kurahashi H."/>
            <person name="Saitta S."/>
            <person name="Budarf M.L."/>
            <person name="McDermid H.E."/>
            <person name="Johnson A."/>
            <person name="Wong A.C.C."/>
            <person name="Morrow B.E."/>
            <person name="Edelmann L."/>
            <person name="Kim U.J."/>
            <person name="Shizuya H."/>
            <person name="Simon M.I."/>
            <person name="Dumanski J.P."/>
            <person name="Peyrard M."/>
            <person name="Kedra D."/>
            <person name="Seroussi E."/>
            <person name="Fransson I."/>
            <person name="Tapia I."/>
            <person name="Bruder C.E."/>
            <person name="O'Brien K.P."/>
            <person name="Wilkinson P."/>
            <person name="Bodenteich A."/>
            <person name="Hartman K."/>
            <person name="Hu X."/>
            <person name="Khan A.S."/>
            <person name="Lane L."/>
            <person name="Tilahun Y."/>
            <person name="Wright H."/>
        </authorList>
    </citation>
    <scope>NUCLEOTIDE SEQUENCE [LARGE SCALE GENOMIC DNA]</scope>
</reference>
<reference key="2">
    <citation type="submission" date="2005-07" db="EMBL/GenBank/DDBJ databases">
        <authorList>
            <person name="Mural R.J."/>
            <person name="Istrail S."/>
            <person name="Sutton G.G."/>
            <person name="Florea L."/>
            <person name="Halpern A.L."/>
            <person name="Mobarry C.M."/>
            <person name="Lippert R."/>
            <person name="Walenz B."/>
            <person name="Shatkay H."/>
            <person name="Dew I."/>
            <person name="Miller J.R."/>
            <person name="Flanigan M.J."/>
            <person name="Edwards N.J."/>
            <person name="Bolanos R."/>
            <person name="Fasulo D."/>
            <person name="Halldorsson B.V."/>
            <person name="Hannenhalli S."/>
            <person name="Turner R."/>
            <person name="Yooseph S."/>
            <person name="Lu F."/>
            <person name="Nusskern D.R."/>
            <person name="Shue B.C."/>
            <person name="Zheng X.H."/>
            <person name="Zhong F."/>
            <person name="Delcher A.L."/>
            <person name="Huson D.H."/>
            <person name="Kravitz S.A."/>
            <person name="Mouchard L."/>
            <person name="Reinert K."/>
            <person name="Remington K.A."/>
            <person name="Clark A.G."/>
            <person name="Waterman M.S."/>
            <person name="Eichler E.E."/>
            <person name="Adams M.D."/>
            <person name="Hunkapiller M.W."/>
            <person name="Myers E.W."/>
            <person name="Venter J.C."/>
        </authorList>
    </citation>
    <scope>NUCLEOTIDE SEQUENCE [LARGE SCALE GENOMIC DNA]</scope>
</reference>
<reference key="3">
    <citation type="journal article" date="2004" name="Genome Res.">
        <title>The status, quality, and expansion of the NIH full-length cDNA project: the Mammalian Gene Collection (MGC).</title>
        <authorList>
            <consortium name="The MGC Project Team"/>
        </authorList>
    </citation>
    <scope>NUCLEOTIDE SEQUENCE [LARGE SCALE MRNA]</scope>
    <source>
        <tissue>Brain</tissue>
        <tissue>Placenta</tissue>
    </source>
</reference>
<gene>
    <name type="primary">CDPF1</name>
    <name type="synonym">C22orf40</name>
</gene>
<evidence type="ECO:0000256" key="1">
    <source>
        <dbReference type="SAM" id="MobiDB-lite"/>
    </source>
</evidence>
<evidence type="ECO:0000305" key="2"/>
<comment type="interaction">
    <interactant intactId="EBI-2802782">
        <id>Q6NVV7</id>
    </interactant>
    <interactant intactId="EBI-711810">
        <id>O14503</id>
        <label>BHLHE40</label>
    </interactant>
    <organismsDiffer>false</organismsDiffer>
    <experiments>3</experiments>
</comment>
<comment type="interaction">
    <interactant intactId="EBI-2802782">
        <id>Q6NVV7</id>
    </interactant>
    <interactant intactId="EBI-744545">
        <id>Q8NEC5</id>
        <label>CATSPER1</label>
    </interactant>
    <organismsDiffer>false</organismsDiffer>
    <experiments>3</experiments>
</comment>
<comment type="interaction">
    <interactant intactId="EBI-2802782">
        <id>Q6NVV7</id>
    </interactant>
    <interactant intactId="EBI-10192698">
        <id>Q02930-3</id>
        <label>CREB5</label>
    </interactant>
    <organismsDiffer>false</organismsDiffer>
    <experiments>3</experiments>
</comment>
<comment type="interaction">
    <interactant intactId="EBI-2802782">
        <id>Q6NVV7</id>
    </interactant>
    <interactant intactId="EBI-742054">
        <id>Q96D03</id>
        <label>DDIT4L</label>
    </interactant>
    <organismsDiffer>false</organismsDiffer>
    <experiments>3</experiments>
</comment>
<comment type="interaction">
    <interactant intactId="EBI-2802782">
        <id>Q6NVV7</id>
    </interactant>
    <interactant intactId="EBI-719374">
        <id>Q14147</id>
        <label>DHX34</label>
    </interactant>
    <organismsDiffer>false</organismsDiffer>
    <experiments>3</experiments>
</comment>
<comment type="interaction">
    <interactant intactId="EBI-2802782">
        <id>Q6NVV7</id>
    </interactant>
    <interactant intactId="EBI-743414">
        <id>O95967</id>
        <label>EFEMP2</label>
    </interactant>
    <organismsDiffer>false</organismsDiffer>
    <experiments>3</experiments>
</comment>
<comment type="interaction">
    <interactant intactId="EBI-2802782">
        <id>Q6NVV7</id>
    </interactant>
    <interactant intactId="EBI-744099">
        <id>Q9H0I2</id>
        <label>ENKD1</label>
    </interactant>
    <organismsDiffer>false</organismsDiffer>
    <experiments>3</experiments>
</comment>
<comment type="interaction">
    <interactant intactId="EBI-2802782">
        <id>Q6NVV7</id>
    </interactant>
    <interactant intactId="EBI-11960181">
        <id>A4D161</id>
        <label>FAM221A</label>
    </interactant>
    <organismsDiffer>false</organismsDiffer>
    <experiments>3</experiments>
</comment>
<comment type="interaction">
    <interactant intactId="EBI-2802782">
        <id>Q6NVV7</id>
    </interactant>
    <interactant intactId="EBI-725515">
        <id>O43559</id>
        <label>FRS3</label>
    </interactant>
    <organismsDiffer>false</organismsDiffer>
    <experiments>3</experiments>
</comment>
<comment type="interaction">
    <interactant intactId="EBI-2802782">
        <id>Q6NVV7</id>
    </interactant>
    <interactant intactId="EBI-11953488">
        <id>P56524-2</id>
        <label>HDAC4</label>
    </interactant>
    <organismsDiffer>false</organismsDiffer>
    <experiments>3</experiments>
</comment>
<comment type="interaction">
    <interactant intactId="EBI-2802782">
        <id>Q6NVV7</id>
    </interactant>
    <interactant intactId="EBI-740785">
        <id>P49639</id>
        <label>HOXA1</label>
    </interactant>
    <organismsDiffer>false</organismsDiffer>
    <experiments>3</experiments>
</comment>
<comment type="interaction">
    <interactant intactId="EBI-2802782">
        <id>Q6NVV7</id>
    </interactant>
    <interactant intactId="EBI-4397613">
        <id>Q7L273</id>
        <label>KCTD9</label>
    </interactant>
    <organismsDiffer>false</organismsDiffer>
    <experiments>3</experiments>
</comment>
<comment type="interaction">
    <interactant intactId="EBI-2802782">
        <id>Q6NVV7</id>
    </interactant>
    <interactant intactId="EBI-2555085">
        <id>Q8IVT2</id>
        <label>MISP</label>
    </interactant>
    <organismsDiffer>false</organismsDiffer>
    <experiments>3</experiments>
</comment>
<comment type="interaction">
    <interactant intactId="EBI-2802782">
        <id>Q6NVV7</id>
    </interactant>
    <interactant intactId="EBI-14084211">
        <id>A2BDE7</id>
        <label>PHLDA1</label>
    </interactant>
    <organismsDiffer>false</organismsDiffer>
    <experiments>3</experiments>
</comment>
<comment type="interaction">
    <interactant intactId="EBI-2802782">
        <id>Q6NVV7</id>
    </interactant>
    <interactant intactId="EBI-11952651">
        <id>Q7Z6R9</id>
        <label>TFAP2D</label>
    </interactant>
    <organismsDiffer>false</organismsDiffer>
    <experiments>3</experiments>
</comment>
<comment type="interaction">
    <interactant intactId="EBI-2802782">
        <id>Q6NVV7</id>
    </interactant>
    <interactant intactId="EBI-11957216">
        <id>A8MV65-2</id>
        <label>VGLL3</label>
    </interactant>
    <organismsDiffer>false</organismsDiffer>
    <experiments>3</experiments>
</comment>
<comment type="interaction">
    <interactant intactId="EBI-2802782">
        <id>Q6NVV7</id>
    </interactant>
    <interactant intactId="EBI-11963196">
        <id>Q15915</id>
        <label>ZIC1</label>
    </interactant>
    <organismsDiffer>false</organismsDiffer>
    <experiments>3</experiments>
</comment>
<comment type="similarity">
    <text evidence="2">Belongs to the CDPF1 family.</text>
</comment>
<proteinExistence type="evidence at protein level"/>
<feature type="chain" id="PRO_0000341360" description="Cysteine-rich DPF motif domain-containing protein 1">
    <location>
        <begin position="1"/>
        <end position="123"/>
    </location>
</feature>
<feature type="region of interest" description="Disordered" evidence="1">
    <location>
        <begin position="102"/>
        <end position="123"/>
    </location>
</feature>
<feature type="compositionally biased region" description="Polar residues" evidence="1">
    <location>
        <begin position="114"/>
        <end position="123"/>
    </location>
</feature>
<feature type="sequence variant" id="VAR_044058" description="In dbSNP:rs9627281.">
    <original>V</original>
    <variation>A</variation>
    <location>
        <position position="5"/>
    </location>
</feature>
<feature type="sequence variant" id="VAR_062237" description="In dbSNP:rs55641018.">
    <original>L</original>
    <variation>R</variation>
    <location>
        <position position="70"/>
    </location>
</feature>
<feature type="sequence conflict" description="In Ref. 3; AAH45796." evidence="2" ref="3">
    <original>Q</original>
    <variation>R</variation>
    <location>
        <position position="103"/>
    </location>
</feature>
<accession>Q6NVV7</accession>
<accession>A6NCA1</accession>
<accession>A9IU12</accession>
<accession>A9IU16</accession>
<accession>Q3ZCR8</accession>
<protein>
    <recommendedName>
        <fullName>Cysteine-rich DPF motif domain-containing protein 1</fullName>
    </recommendedName>
</protein>
<keyword id="KW-1267">Proteomics identification</keyword>
<keyword id="KW-1185">Reference proteome</keyword>
<organism>
    <name type="scientific">Homo sapiens</name>
    <name type="common">Human</name>
    <dbReference type="NCBI Taxonomy" id="9606"/>
    <lineage>
        <taxon>Eukaryota</taxon>
        <taxon>Metazoa</taxon>
        <taxon>Chordata</taxon>
        <taxon>Craniata</taxon>
        <taxon>Vertebrata</taxon>
        <taxon>Euteleostomi</taxon>
        <taxon>Mammalia</taxon>
        <taxon>Eutheria</taxon>
        <taxon>Euarchontoglires</taxon>
        <taxon>Primates</taxon>
        <taxon>Haplorrhini</taxon>
        <taxon>Catarrhini</taxon>
        <taxon>Hominidae</taxon>
        <taxon>Homo</taxon>
    </lineage>
</organism>